<protein>
    <recommendedName>
        <fullName evidence="1">CinA-like protein</fullName>
    </recommendedName>
</protein>
<name>CINAL_MYCLE</name>
<proteinExistence type="inferred from homology"/>
<comment type="similarity">
    <text evidence="1">Belongs to the CinA family.</text>
</comment>
<comment type="sequence caution" evidence="2">
    <conflict type="erroneous initiation">
        <sequence resource="EMBL-CDS" id="CAB40299"/>
    </conflict>
</comment>
<comment type="sequence caution" evidence="2">
    <conflict type="erroneous initiation">
        <sequence resource="EMBL-CDS" id="CAC30970"/>
    </conflict>
</comment>
<organism>
    <name type="scientific">Mycobacterium leprae (strain TN)</name>
    <dbReference type="NCBI Taxonomy" id="272631"/>
    <lineage>
        <taxon>Bacteria</taxon>
        <taxon>Bacillati</taxon>
        <taxon>Actinomycetota</taxon>
        <taxon>Actinomycetes</taxon>
        <taxon>Mycobacteriales</taxon>
        <taxon>Mycobacteriaceae</taxon>
        <taxon>Mycobacterium</taxon>
    </lineage>
</organism>
<gene>
    <name evidence="1" type="primary">cinA</name>
    <name type="ordered locus">ML2015</name>
    <name type="ORF">MLCB561.17</name>
</gene>
<dbReference type="EMBL" id="AL049571">
    <property type="protein sequence ID" value="CAB40299.1"/>
    <property type="status" value="ALT_INIT"/>
    <property type="molecule type" value="Genomic_DNA"/>
</dbReference>
<dbReference type="EMBL" id="AL583924">
    <property type="protein sequence ID" value="CAC30970.1"/>
    <property type="status" value="ALT_INIT"/>
    <property type="molecule type" value="Genomic_DNA"/>
</dbReference>
<dbReference type="PIR" id="B87161">
    <property type="entry name" value="B87161"/>
</dbReference>
<dbReference type="SMR" id="Q9X7D6"/>
<dbReference type="STRING" id="272631.gene:17575867"/>
<dbReference type="KEGG" id="mle:ML2015"/>
<dbReference type="Leproma" id="ML2015"/>
<dbReference type="eggNOG" id="COG1058">
    <property type="taxonomic scope" value="Bacteria"/>
</dbReference>
<dbReference type="eggNOG" id="COG1546">
    <property type="taxonomic scope" value="Bacteria"/>
</dbReference>
<dbReference type="HOGENOM" id="CLU_030805_9_2_11"/>
<dbReference type="Proteomes" id="UP000000806">
    <property type="component" value="Chromosome"/>
</dbReference>
<dbReference type="CDD" id="cd00885">
    <property type="entry name" value="cinA"/>
    <property type="match status" value="1"/>
</dbReference>
<dbReference type="Gene3D" id="3.90.950.20">
    <property type="entry name" value="CinA-like"/>
    <property type="match status" value="1"/>
</dbReference>
<dbReference type="Gene3D" id="3.40.980.10">
    <property type="entry name" value="MoaB/Mog-like domain"/>
    <property type="match status" value="1"/>
</dbReference>
<dbReference type="HAMAP" id="MF_00226_B">
    <property type="entry name" value="CinA_B"/>
    <property type="match status" value="1"/>
</dbReference>
<dbReference type="InterPro" id="IPR050101">
    <property type="entry name" value="CinA"/>
</dbReference>
<dbReference type="InterPro" id="IPR036653">
    <property type="entry name" value="CinA-like_C"/>
</dbReference>
<dbReference type="InterPro" id="IPR008136">
    <property type="entry name" value="CinA_C"/>
</dbReference>
<dbReference type="InterPro" id="IPR008135">
    <property type="entry name" value="Competence-induced_CinA"/>
</dbReference>
<dbReference type="InterPro" id="IPR036425">
    <property type="entry name" value="MoaB/Mog-like_dom_sf"/>
</dbReference>
<dbReference type="InterPro" id="IPR001453">
    <property type="entry name" value="MoaB/Mog_dom"/>
</dbReference>
<dbReference type="NCBIfam" id="TIGR00199">
    <property type="entry name" value="PncC_domain"/>
    <property type="match status" value="1"/>
</dbReference>
<dbReference type="NCBIfam" id="NF001813">
    <property type="entry name" value="PRK00549.1"/>
    <property type="match status" value="1"/>
</dbReference>
<dbReference type="PANTHER" id="PTHR13939">
    <property type="entry name" value="NICOTINAMIDE-NUCLEOTIDE AMIDOHYDROLASE PNCC"/>
    <property type="match status" value="1"/>
</dbReference>
<dbReference type="PANTHER" id="PTHR13939:SF0">
    <property type="entry name" value="NMN AMIDOHYDROLASE-LIKE PROTEIN YFAY"/>
    <property type="match status" value="1"/>
</dbReference>
<dbReference type="Pfam" id="PF02464">
    <property type="entry name" value="CinA"/>
    <property type="match status" value="1"/>
</dbReference>
<dbReference type="Pfam" id="PF00994">
    <property type="entry name" value="MoCF_biosynth"/>
    <property type="match status" value="1"/>
</dbReference>
<dbReference type="PIRSF" id="PIRSF006728">
    <property type="entry name" value="CinA"/>
    <property type="match status" value="1"/>
</dbReference>
<dbReference type="SMART" id="SM00852">
    <property type="entry name" value="MoCF_biosynth"/>
    <property type="match status" value="1"/>
</dbReference>
<dbReference type="SUPFAM" id="SSF142433">
    <property type="entry name" value="CinA-like"/>
    <property type="match status" value="1"/>
</dbReference>
<dbReference type="SUPFAM" id="SSF53218">
    <property type="entry name" value="Molybdenum cofactor biosynthesis proteins"/>
    <property type="match status" value="1"/>
</dbReference>
<keyword id="KW-1185">Reference proteome</keyword>
<reference key="1">
    <citation type="journal article" date="2001" name="Nature">
        <title>Massive gene decay in the leprosy bacillus.</title>
        <authorList>
            <person name="Cole S.T."/>
            <person name="Eiglmeier K."/>
            <person name="Parkhill J."/>
            <person name="James K.D."/>
            <person name="Thomson N.R."/>
            <person name="Wheeler P.R."/>
            <person name="Honore N."/>
            <person name="Garnier T."/>
            <person name="Churcher C.M."/>
            <person name="Harris D.E."/>
            <person name="Mungall K.L."/>
            <person name="Basham D."/>
            <person name="Brown D."/>
            <person name="Chillingworth T."/>
            <person name="Connor R."/>
            <person name="Davies R.M."/>
            <person name="Devlin K."/>
            <person name="Duthoy S."/>
            <person name="Feltwell T."/>
            <person name="Fraser A."/>
            <person name="Hamlin N."/>
            <person name="Holroyd S."/>
            <person name="Hornsby T."/>
            <person name="Jagels K."/>
            <person name="Lacroix C."/>
            <person name="Maclean J."/>
            <person name="Moule S."/>
            <person name="Murphy L.D."/>
            <person name="Oliver K."/>
            <person name="Quail M.A."/>
            <person name="Rajandream M.A."/>
            <person name="Rutherford K.M."/>
            <person name="Rutter S."/>
            <person name="Seeger K."/>
            <person name="Simon S."/>
            <person name="Simmonds M."/>
            <person name="Skelton J."/>
            <person name="Squares R."/>
            <person name="Squares S."/>
            <person name="Stevens K."/>
            <person name="Taylor K."/>
            <person name="Whitehead S."/>
            <person name="Woodward J.R."/>
            <person name="Barrell B.G."/>
        </authorList>
    </citation>
    <scope>NUCLEOTIDE SEQUENCE [LARGE SCALE GENOMIC DNA]</scope>
    <source>
        <strain>TN</strain>
    </source>
</reference>
<feature type="chain" id="PRO_0000156768" description="CinA-like protein">
    <location>
        <begin position="1"/>
        <end position="428"/>
    </location>
</feature>
<evidence type="ECO:0000255" key="1">
    <source>
        <dbReference type="HAMAP-Rule" id="MF_00226"/>
    </source>
</evidence>
<evidence type="ECO:0000305" key="2"/>
<sequence>MVVSARAGIVVTGTEILTGRVRDRNGPWLADRLLELGVKLAHITICGDCPADIEAQLRFMAEAGVDLIVTSGGLGPTADDMTVEVVARFCNREMVLDVELENKIAAILNSLMTRFNPGDFEAVRAANRKQAMIPAGSQVLDPIGTAPGLVVPGKPTVMVLPGPPSELQPMWRRAVMTAATREAIADRTIYRQQTLRMFGLSESGLAETLRDAQASIPGFDALEITTCLRRGEIEMVTRYEPDVVNVYVELTQLLRDRHGHQLYSEDGARVDDLIAHLLAGRRIATAESCTAGLLAARLTERPGSSDYVAGALVAYSNEAKVTLLGVDPALIAEHGEVSEPVVEAMAAGALQRFDVDTAAAISGIAGPGGGTAEKPIGTVCFTVMLADGGPTLTRTLRLPGNRSDIRERSTTVAMHLLRHALSDTDSVP</sequence>
<accession>Q9X7D6</accession>